<dbReference type="EC" id="3.1.-.-" evidence="1"/>
<dbReference type="EMBL" id="AE000666">
    <property type="protein sequence ID" value="AAB85692.1"/>
    <property type="molecule type" value="Genomic_DNA"/>
</dbReference>
<dbReference type="PIR" id="F69027">
    <property type="entry name" value="F69027"/>
</dbReference>
<dbReference type="RefSeq" id="WP_010876827.1">
    <property type="nucleotide sequence ID" value="NC_000916.1"/>
</dbReference>
<dbReference type="PDB" id="2YCB">
    <property type="method" value="X-ray"/>
    <property type="resolution" value="3.10 A"/>
    <property type="chains" value="A/B=1-636"/>
</dbReference>
<dbReference type="PDBsum" id="2YCB"/>
<dbReference type="SMR" id="O27271"/>
<dbReference type="DIP" id="DIP-59129N"/>
<dbReference type="FunCoup" id="O27271">
    <property type="interactions" value="121"/>
</dbReference>
<dbReference type="STRING" id="187420.MTH_1203"/>
<dbReference type="PaxDb" id="187420-MTH_1203"/>
<dbReference type="EnsemblBacteria" id="AAB85692">
    <property type="protein sequence ID" value="AAB85692"/>
    <property type="gene ID" value="MTH_1203"/>
</dbReference>
<dbReference type="KEGG" id="mth:MTH_1203"/>
<dbReference type="PATRIC" id="fig|187420.15.peg.1181"/>
<dbReference type="HOGENOM" id="CLU_009673_5_1_2"/>
<dbReference type="InParanoid" id="O27271"/>
<dbReference type="EvolutionaryTrace" id="O27271"/>
<dbReference type="Proteomes" id="UP000005223">
    <property type="component" value="Chromosome"/>
</dbReference>
<dbReference type="GO" id="GO:0003677">
    <property type="term" value="F:DNA binding"/>
    <property type="evidence" value="ECO:0007669"/>
    <property type="project" value="UniProtKB-KW"/>
</dbReference>
<dbReference type="GO" id="GO:0004527">
    <property type="term" value="F:exonuclease activity"/>
    <property type="evidence" value="ECO:0007669"/>
    <property type="project" value="UniProtKB-KW"/>
</dbReference>
<dbReference type="GO" id="GO:0042802">
    <property type="term" value="F:identical protein binding"/>
    <property type="evidence" value="ECO:0000353"/>
    <property type="project" value="IntAct"/>
</dbReference>
<dbReference type="GO" id="GO:0003723">
    <property type="term" value="F:RNA binding"/>
    <property type="evidence" value="ECO:0000314"/>
    <property type="project" value="UniProtKB"/>
</dbReference>
<dbReference type="GO" id="GO:0004521">
    <property type="term" value="F:RNA endonuclease activity"/>
    <property type="evidence" value="ECO:0007669"/>
    <property type="project" value="TreeGrafter"/>
</dbReference>
<dbReference type="GO" id="GO:0004540">
    <property type="term" value="F:RNA nuclease activity"/>
    <property type="evidence" value="ECO:0000314"/>
    <property type="project" value="UniProtKB"/>
</dbReference>
<dbReference type="GO" id="GO:0008270">
    <property type="term" value="F:zinc ion binding"/>
    <property type="evidence" value="ECO:0000314"/>
    <property type="project" value="UniProtKB"/>
</dbReference>
<dbReference type="GO" id="GO:0006353">
    <property type="term" value="P:DNA-templated transcription termination"/>
    <property type="evidence" value="ECO:0007669"/>
    <property type="project" value="UniProtKB-KW"/>
</dbReference>
<dbReference type="CDD" id="cd22532">
    <property type="entry name" value="KH-II_CPSF_arch_rpt1"/>
    <property type="match status" value="1"/>
</dbReference>
<dbReference type="CDD" id="cd02410">
    <property type="entry name" value="KH-II_CPSF_arch_rpt2"/>
    <property type="match status" value="1"/>
</dbReference>
<dbReference type="CDD" id="cd16295">
    <property type="entry name" value="TTHA0252-CPSF-like_MBL-fold"/>
    <property type="match status" value="1"/>
</dbReference>
<dbReference type="FunFam" id="3.30.300.20:FF:000038">
    <property type="entry name" value="Cleavage and polyadenylation specificity factor"/>
    <property type="match status" value="1"/>
</dbReference>
<dbReference type="Gene3D" id="3.30.300.20">
    <property type="match status" value="1"/>
</dbReference>
<dbReference type="Gene3D" id="3.30.300.230">
    <property type="match status" value="1"/>
</dbReference>
<dbReference type="Gene3D" id="3.40.50.10890">
    <property type="match status" value="1"/>
</dbReference>
<dbReference type="Gene3D" id="3.60.15.10">
    <property type="entry name" value="Ribonuclease Z/Hydroxyacylglutathione hydrolase-like"/>
    <property type="match status" value="1"/>
</dbReference>
<dbReference type="HAMAP" id="MF_00870">
    <property type="entry name" value="FttA"/>
    <property type="match status" value="1"/>
</dbReference>
<dbReference type="InterPro" id="IPR019975">
    <property type="entry name" value="aCPSF1"/>
</dbReference>
<dbReference type="InterPro" id="IPR022712">
    <property type="entry name" value="Beta_Casp"/>
</dbReference>
<dbReference type="InterPro" id="IPR004087">
    <property type="entry name" value="KH_dom"/>
</dbReference>
<dbReference type="InterPro" id="IPR015946">
    <property type="entry name" value="KH_dom-like_a/b"/>
</dbReference>
<dbReference type="InterPro" id="IPR009019">
    <property type="entry name" value="KH_sf_prok-type"/>
</dbReference>
<dbReference type="InterPro" id="IPR050698">
    <property type="entry name" value="MBL"/>
</dbReference>
<dbReference type="InterPro" id="IPR001279">
    <property type="entry name" value="Metallo-B-lactamas"/>
</dbReference>
<dbReference type="InterPro" id="IPR036866">
    <property type="entry name" value="RibonucZ/Hydroxyglut_hydro"/>
</dbReference>
<dbReference type="InterPro" id="IPR011108">
    <property type="entry name" value="RMMBL"/>
</dbReference>
<dbReference type="InterPro" id="IPR033769">
    <property type="entry name" value="TffA_KH"/>
</dbReference>
<dbReference type="NCBIfam" id="TIGR03675">
    <property type="entry name" value="arCOG00543"/>
    <property type="match status" value="1"/>
</dbReference>
<dbReference type="PANTHER" id="PTHR11203:SF51">
    <property type="entry name" value="CLEAVAGE AND POLYADENYLATION SPECIFICITY FACTOR"/>
    <property type="match status" value="1"/>
</dbReference>
<dbReference type="PANTHER" id="PTHR11203">
    <property type="entry name" value="CLEAVAGE AND POLYADENYLATION SPECIFICITY FACTOR FAMILY MEMBER"/>
    <property type="match status" value="1"/>
</dbReference>
<dbReference type="Pfam" id="PF10996">
    <property type="entry name" value="Beta-Casp"/>
    <property type="match status" value="1"/>
</dbReference>
<dbReference type="Pfam" id="PF17214">
    <property type="entry name" value="KH_TffA"/>
    <property type="match status" value="1"/>
</dbReference>
<dbReference type="Pfam" id="PF16661">
    <property type="entry name" value="Lactamase_B_6"/>
    <property type="match status" value="1"/>
</dbReference>
<dbReference type="Pfam" id="PF07521">
    <property type="entry name" value="RMMBL"/>
    <property type="match status" value="1"/>
</dbReference>
<dbReference type="SMART" id="SM01027">
    <property type="entry name" value="Beta-Casp"/>
    <property type="match status" value="1"/>
</dbReference>
<dbReference type="SMART" id="SM00322">
    <property type="entry name" value="KH"/>
    <property type="match status" value="1"/>
</dbReference>
<dbReference type="SMART" id="SM00849">
    <property type="entry name" value="Lactamase_B"/>
    <property type="match status" value="1"/>
</dbReference>
<dbReference type="SUPFAM" id="SSF56281">
    <property type="entry name" value="Metallo-hydrolase/oxidoreductase"/>
    <property type="match status" value="1"/>
</dbReference>
<dbReference type="SUPFAM" id="SSF54814">
    <property type="entry name" value="Prokaryotic type KH domain (KH-domain type II)"/>
    <property type="match status" value="1"/>
</dbReference>
<dbReference type="PROSITE" id="PS50084">
    <property type="entry name" value="KH_TYPE_1"/>
    <property type="match status" value="1"/>
</dbReference>
<accession>O27271</accession>
<proteinExistence type="evidence at protein level"/>
<sequence>MVSEMLEEIKRTIMQRLPERVQVAKVEFEGPEVVIYTKNPEIITENGNLIRDIAKDIRKRIIIRSDRSVLMDPEKAIRKIHEIVPEEAKITNISFDDVTCEVIIEARKPGLVIGKYGSTSREIVKNTGWAPKILRTPPISSEIIERIRRTLRKNSKERKKILQQLGNRIHQKPKYDNDWARLTAMGGFREVGRSCLYLQTPNSRVLLDCGVNVAGGDDKNSYPYLNVPEFTLDSLDAVIITHAHLDHSGFLPYLYHYGYDGPVYCTAPTRDLMTLLQLDHIDIAHREDEPLPFNVKHVKKSVKHTITLDYGEVTDIAPDIRLTLHNAGHILGSAMAHLHIGDGQHNMVYTGDFKYEQSRLLEAAANRFPRIETLVMESTYGGHEDVQPSRNRAEKELVKTIYSTLRRGGKILIPVFAVGRAQELMIVLEEYIRTGIIDEVPVYIDGMIWEANAIHTARPEYLSKDLRDQIFHMGHNPFISDIFHKVNGMDERREIVEGEPSIILSTSGMLTGGNSLEYFKWLCEDPDNSLVFVGYQAEGSLGRRIQKGWKEIPLKDEDDKMRVYNVRMNIKTIEGFSGHSDRRQLMEYVKRISPKPEKILLCHGDNYKTLDLASSIYRTYRIETKTPLNLETVRIQ</sequence>
<comment type="function">
    <text evidence="1">Terminates transcription on the whole genome. Termination is linked to FttA-mediated RNA cleavage and does not require NTP hydrolysis. Cleaves endonucleolytically at the RNA exit channel of RNA polymerase (RNAP); the 5'-3' exonuclease activity of this protein degrades the nascent RNA released from RNAP.</text>
</comment>
<comment type="function">
    <text evidence="2">An RNA nuclease, it bind single-stranded RNA (ssRNA) with a preference for U-rich sequences (PubMed:21565697).</text>
</comment>
<comment type="cofactor">
    <cofactor evidence="1 2">
        <name>Zn(2+)</name>
        <dbReference type="ChEBI" id="CHEBI:29105"/>
    </cofactor>
    <text evidence="1 2 5">Binds 2 Zn(2+) ions, which are required for nuclease activity (PubMed:21565697).</text>
</comment>
<comment type="activity regulation">
    <text evidence="2">Most active at 0.5 M or 0.7 M NaCl, less active at 1.0 M NaCl (PubMed:21565697). Nuclease activity is inhibited by N,N,Tetrakis-(2-pyridylmethyl)-ethylene diamine (TPEN), a specific chelator of zinc ions (PubMed:21565697).</text>
</comment>
<comment type="biophysicochemical properties">
    <temperatureDependence>
        <text evidence="2">Optimum temperature is 22-37 degrees Celsius, less active at 55 degrees Celsius (PubMed:21565697).</text>
    </temperatureDependence>
</comment>
<comment type="subunit">
    <text evidence="1 3">Homodimer (Probable) (PubMed:21565697). Interacts with RNA polymerase (RNAP), interacts with the Spt4-Spt5 complex (By similarity). Does not seem to interact with the RNA degrading exosome (Probable) (PubMed:21565697).</text>
</comment>
<comment type="interaction">
    <interactant intactId="EBI-15926242">
        <id>O27271</id>
    </interactant>
    <interactant intactId="EBI-15926242">
        <id>O27271</id>
        <label>fttA</label>
    </interactant>
    <organismsDiffer>false</organismsDiffer>
    <experiments>3</experiments>
</comment>
<comment type="domain">
    <text evidence="2">The KHb domain binds ssRNA better than the KHa domain (PubMed:21565697).</text>
</comment>
<comment type="similarity">
    <text evidence="1">Belongs to the metallo-beta-lactamase superfamily. RNA-metabolizing metallo-beta-lactamase-like family. FttA subfamily.</text>
</comment>
<organism>
    <name type="scientific">Methanothermobacter thermautotrophicus (strain ATCC 29096 / DSM 1053 / JCM 10044 / NBRC 100330 / Delta H)</name>
    <name type="common">Methanobacterium thermoautotrophicum</name>
    <dbReference type="NCBI Taxonomy" id="187420"/>
    <lineage>
        <taxon>Archaea</taxon>
        <taxon>Methanobacteriati</taxon>
        <taxon>Methanobacteriota</taxon>
        <taxon>Methanomada group</taxon>
        <taxon>Methanobacteria</taxon>
        <taxon>Methanobacteriales</taxon>
        <taxon>Methanobacteriaceae</taxon>
        <taxon>Methanothermobacter</taxon>
    </lineage>
</organism>
<evidence type="ECO:0000255" key="1">
    <source>
        <dbReference type="HAMAP-Rule" id="MF_00870"/>
    </source>
</evidence>
<evidence type="ECO:0000269" key="2">
    <source>
    </source>
</evidence>
<evidence type="ECO:0000305" key="3">
    <source>
    </source>
</evidence>
<evidence type="ECO:0000312" key="4">
    <source>
        <dbReference type="EMBL" id="AAB85692.1"/>
    </source>
</evidence>
<evidence type="ECO:0007744" key="5">
    <source>
        <dbReference type="PDB" id="2YCB"/>
    </source>
</evidence>
<evidence type="ECO:0007829" key="6">
    <source>
        <dbReference type="PDB" id="2YCB"/>
    </source>
</evidence>
<reference evidence="4" key="1">
    <citation type="journal article" date="1997" name="J. Bacteriol.">
        <title>Complete genome sequence of Methanobacterium thermoautotrophicum deltaH: functional analysis and comparative genomics.</title>
        <authorList>
            <person name="Smith D.R."/>
            <person name="Doucette-Stamm L.A."/>
            <person name="Deloughery C."/>
            <person name="Lee H.-M."/>
            <person name="Dubois J."/>
            <person name="Aldredge T."/>
            <person name="Bashirzadeh R."/>
            <person name="Blakely D."/>
            <person name="Cook R."/>
            <person name="Gilbert K."/>
            <person name="Harrison D."/>
            <person name="Hoang L."/>
            <person name="Keagle P."/>
            <person name="Lumm W."/>
            <person name="Pothier B."/>
            <person name="Qiu D."/>
            <person name="Spadafora R."/>
            <person name="Vicare R."/>
            <person name="Wang Y."/>
            <person name="Wierzbowski J."/>
            <person name="Gibson R."/>
            <person name="Jiwani N."/>
            <person name="Caruso A."/>
            <person name="Bush D."/>
            <person name="Safer H."/>
            <person name="Patwell D."/>
            <person name="Prabhakar S."/>
            <person name="McDougall S."/>
            <person name="Shimer G."/>
            <person name="Goyal A."/>
            <person name="Pietrovski S."/>
            <person name="Church G.M."/>
            <person name="Daniels C.J."/>
            <person name="Mao J.-I."/>
            <person name="Rice P."/>
            <person name="Noelling J."/>
            <person name="Reeve J.N."/>
        </authorList>
    </citation>
    <scope>NUCLEOTIDE SEQUENCE [LARGE SCALE GENOMIC DNA]</scope>
    <source>
        <strain>ATCC 29096 / DSM 1053 / JCM 10044 / NBRC 100330 / Delta H</strain>
    </source>
</reference>
<reference evidence="5" key="2">
    <citation type="journal article" date="2011" name="Structure">
        <title>Structure and activity of a novel archaeal beta-CASP protein with N-terminal KH domains.</title>
        <authorList>
            <person name="Silva A.P."/>
            <person name="Chechik M."/>
            <person name="Byrne R.T."/>
            <person name="Waterman D.G."/>
            <person name="Ng C.L."/>
            <person name="Dodson E.J."/>
            <person name="Koonin E.V."/>
            <person name="Antson A.A."/>
            <person name="Smits C."/>
        </authorList>
    </citation>
    <scope>X-RAY CRYSTALLOGRAPHY (3.10 ANGSTROMS) IN COMPLEX WITH ZINC</scope>
    <scope>FUNCTION AS A NUCLEASE</scope>
    <scope>COFACTOR</scope>
    <scope>ACTIVITY REGULATION</scope>
    <scope>BIOPHYSICOCHEMICAL PROPERTIES</scope>
    <scope>SUBUNIT</scope>
    <scope>DOMAIN</scope>
    <scope>RNA-BINDING</scope>
    <source>
        <strain>ATCC 29096 / DSM 1053 / JCM 10044 / NBRC 100330 / Delta H</strain>
    </source>
</reference>
<gene>
    <name evidence="1" type="primary">fttA</name>
    <name evidence="4" type="ordered locus">MTH_1203</name>
</gene>
<feature type="chain" id="PRO_0000460392" description="Transcription termination factor FttA">
    <location>
        <begin position="1"/>
        <end position="636"/>
    </location>
</feature>
<feature type="region of interest" description="KHa" evidence="1 3">
    <location>
        <begin position="3"/>
        <end position="70"/>
    </location>
</feature>
<feature type="region of interest" description="KHb" evidence="1 3">
    <location>
        <begin position="71"/>
        <end position="138"/>
    </location>
</feature>
<feature type="region of interest" description="Metallo-beta-lactamase N-terminus" evidence="1 3">
    <location>
        <begin position="179"/>
        <end position="383"/>
    </location>
</feature>
<feature type="region of interest" description="Beta-Casp" evidence="1 3">
    <location>
        <begin position="384"/>
        <end position="577"/>
    </location>
</feature>
<feature type="region of interest" description="Metallo-beta-lactamase C-terminus" evidence="1 3">
    <location>
        <begin position="578"/>
        <end position="636"/>
    </location>
</feature>
<feature type="binding site" evidence="1 2 5">
    <location>
        <position position="242"/>
    </location>
    <ligand>
        <name>Zn(2+)</name>
        <dbReference type="ChEBI" id="CHEBI:29105"/>
        <label>1</label>
    </ligand>
</feature>
<feature type="binding site" evidence="1 2 5">
    <location>
        <position position="244"/>
    </location>
    <ligand>
        <name>Zn(2+)</name>
        <dbReference type="ChEBI" id="CHEBI:29105"/>
        <label>1</label>
    </ligand>
</feature>
<feature type="binding site" evidence="1 2 5">
    <location>
        <position position="246"/>
    </location>
    <ligand>
        <name>Zn(2+)</name>
        <dbReference type="ChEBI" id="CHEBI:29105"/>
        <label>2</label>
    </ligand>
</feature>
<feature type="binding site" evidence="1 2 5">
    <location>
        <position position="247"/>
    </location>
    <ligand>
        <name>Zn(2+)</name>
        <dbReference type="ChEBI" id="CHEBI:29105"/>
        <label>2</label>
    </ligand>
</feature>
<feature type="binding site" evidence="1 2 5">
    <location>
        <position position="329"/>
    </location>
    <ligand>
        <name>Zn(2+)</name>
        <dbReference type="ChEBI" id="CHEBI:29105"/>
        <label>1</label>
    </ligand>
</feature>
<feature type="binding site" evidence="1 2 5">
    <location>
        <position position="352"/>
    </location>
    <ligand>
        <name>Zn(2+)</name>
        <dbReference type="ChEBI" id="CHEBI:29105"/>
        <label>1</label>
    </ligand>
</feature>
<feature type="binding site" evidence="1 2 5">
    <location>
        <position position="352"/>
    </location>
    <ligand>
        <name>Zn(2+)</name>
        <dbReference type="ChEBI" id="CHEBI:29105"/>
        <label>2</label>
    </ligand>
</feature>
<feature type="binding site" evidence="1 2 5">
    <location>
        <position position="603"/>
    </location>
    <ligand>
        <name>Zn(2+)</name>
        <dbReference type="ChEBI" id="CHEBI:29105"/>
        <label>2</label>
    </ligand>
</feature>
<feature type="helix" evidence="6">
    <location>
        <begin position="5"/>
        <end position="15"/>
    </location>
</feature>
<feature type="strand" evidence="6">
    <location>
        <begin position="23"/>
        <end position="29"/>
    </location>
</feature>
<feature type="strand" evidence="6">
    <location>
        <begin position="32"/>
        <end position="38"/>
    </location>
</feature>
<feature type="helix" evidence="6">
    <location>
        <begin position="41"/>
        <end position="44"/>
    </location>
</feature>
<feature type="helix" evidence="6">
    <location>
        <begin position="48"/>
        <end position="57"/>
    </location>
</feature>
<feature type="strand" evidence="6">
    <location>
        <begin position="61"/>
        <end position="65"/>
    </location>
</feature>
<feature type="helix" evidence="6">
    <location>
        <begin position="67"/>
        <end position="69"/>
    </location>
</feature>
<feature type="helix" evidence="6">
    <location>
        <begin position="73"/>
        <end position="82"/>
    </location>
</feature>
<feature type="strand" evidence="6">
    <location>
        <begin position="90"/>
        <end position="96"/>
    </location>
</feature>
<feature type="turn" evidence="6">
    <location>
        <begin position="97"/>
        <end position="100"/>
    </location>
</feature>
<feature type="strand" evidence="6">
    <location>
        <begin position="101"/>
        <end position="107"/>
    </location>
</feature>
<feature type="helix" evidence="6">
    <location>
        <begin position="110"/>
        <end position="113"/>
    </location>
</feature>
<feature type="helix" evidence="6">
    <location>
        <begin position="118"/>
        <end position="127"/>
    </location>
</feature>
<feature type="strand" evidence="6">
    <location>
        <begin position="130"/>
        <end position="135"/>
    </location>
</feature>
<feature type="helix" evidence="6">
    <location>
        <begin position="142"/>
        <end position="153"/>
    </location>
</feature>
<feature type="helix" evidence="6">
    <location>
        <begin position="155"/>
        <end position="169"/>
    </location>
</feature>
<feature type="strand" evidence="6">
    <location>
        <begin position="180"/>
        <end position="192"/>
    </location>
</feature>
<feature type="strand" evidence="6">
    <location>
        <begin position="195"/>
        <end position="199"/>
    </location>
</feature>
<feature type="strand" evidence="6">
    <location>
        <begin position="204"/>
        <end position="209"/>
    </location>
</feature>
<feature type="helix" evidence="6">
    <location>
        <begin position="218"/>
        <end position="221"/>
    </location>
</feature>
<feature type="turn" evidence="6">
    <location>
        <begin position="232"/>
        <end position="234"/>
    </location>
</feature>
<feature type="strand" evidence="6">
    <location>
        <begin position="237"/>
        <end position="239"/>
    </location>
</feature>
<feature type="strand" evidence="6">
    <location>
        <begin position="241"/>
        <end position="244"/>
    </location>
</feature>
<feature type="helix" evidence="6">
    <location>
        <begin position="245"/>
        <end position="248"/>
    </location>
</feature>
<feature type="helix" evidence="6">
    <location>
        <begin position="251"/>
        <end position="256"/>
    </location>
</feature>
<feature type="strand" evidence="6">
    <location>
        <begin position="263"/>
        <end position="265"/>
    </location>
</feature>
<feature type="helix" evidence="6">
    <location>
        <begin position="267"/>
        <end position="287"/>
    </location>
</feature>
<feature type="helix" evidence="6">
    <location>
        <begin position="295"/>
        <end position="303"/>
    </location>
</feature>
<feature type="strand" evidence="6">
    <location>
        <begin position="305"/>
        <end position="307"/>
    </location>
</feature>
<feature type="strand" evidence="6">
    <location>
        <begin position="314"/>
        <end position="317"/>
    </location>
</feature>
<feature type="strand" evidence="6">
    <location>
        <begin position="320"/>
        <end position="326"/>
    </location>
</feature>
<feature type="strand" evidence="6">
    <location>
        <begin position="334"/>
        <end position="340"/>
    </location>
</feature>
<feature type="turn" evidence="6">
    <location>
        <begin position="341"/>
        <end position="345"/>
    </location>
</feature>
<feature type="strand" evidence="6">
    <location>
        <begin position="347"/>
        <end position="349"/>
    </location>
</feature>
<feature type="strand" evidence="6">
    <location>
        <begin position="359"/>
        <end position="361"/>
    </location>
</feature>
<feature type="strand" evidence="6">
    <location>
        <begin position="372"/>
        <end position="377"/>
    </location>
</feature>
<feature type="helix" evidence="6">
    <location>
        <begin position="383"/>
        <end position="385"/>
    </location>
</feature>
<feature type="helix" evidence="6">
    <location>
        <begin position="390"/>
        <end position="407"/>
    </location>
</feature>
<feature type="strand" evidence="6">
    <location>
        <begin position="411"/>
        <end position="414"/>
    </location>
</feature>
<feature type="turn" evidence="6">
    <location>
        <begin position="417"/>
        <end position="419"/>
    </location>
</feature>
<feature type="helix" evidence="6">
    <location>
        <begin position="420"/>
        <end position="433"/>
    </location>
</feature>
<feature type="strand" evidence="6">
    <location>
        <begin position="442"/>
        <end position="445"/>
    </location>
</feature>
<feature type="helix" evidence="6">
    <location>
        <begin position="446"/>
        <end position="457"/>
    </location>
</feature>
<feature type="helix" evidence="6">
    <location>
        <begin position="459"/>
        <end position="461"/>
    </location>
</feature>
<feature type="helix" evidence="6">
    <location>
        <begin position="464"/>
        <end position="471"/>
    </location>
</feature>
<feature type="helix" evidence="6">
    <location>
        <begin position="477"/>
        <end position="479"/>
    </location>
</feature>
<feature type="strand" evidence="6">
    <location>
        <begin position="483"/>
        <end position="486"/>
    </location>
</feature>
<feature type="helix" evidence="6">
    <location>
        <begin position="489"/>
        <end position="497"/>
    </location>
</feature>
<feature type="strand" evidence="6">
    <location>
        <begin position="498"/>
        <end position="500"/>
    </location>
</feature>
<feature type="strand" evidence="6">
    <location>
        <begin position="502"/>
        <end position="506"/>
    </location>
</feature>
<feature type="strand" evidence="6">
    <location>
        <begin position="508"/>
        <end position="512"/>
    </location>
</feature>
<feature type="helix" evidence="6">
    <location>
        <begin position="513"/>
        <end position="522"/>
    </location>
</feature>
<feature type="strand" evidence="6">
    <location>
        <begin position="528"/>
        <end position="532"/>
    </location>
</feature>
<feature type="strand" evidence="6">
    <location>
        <begin position="538"/>
        <end position="540"/>
    </location>
</feature>
<feature type="helix" evidence="6">
    <location>
        <begin position="541"/>
        <end position="546"/>
    </location>
</feature>
<feature type="strand" evidence="6">
    <location>
        <begin position="551"/>
        <end position="555"/>
    </location>
</feature>
<feature type="strand" evidence="6">
    <location>
        <begin position="557"/>
        <end position="559"/>
    </location>
</feature>
<feature type="strand" evidence="6">
    <location>
        <begin position="561"/>
        <end position="565"/>
    </location>
</feature>
<feature type="strand" evidence="6">
    <location>
        <begin position="568"/>
        <end position="572"/>
    </location>
</feature>
<feature type="helix" evidence="6">
    <location>
        <begin position="582"/>
        <end position="590"/>
    </location>
</feature>
<feature type="strand" evidence="6">
    <location>
        <begin position="597"/>
        <end position="604"/>
    </location>
</feature>
<feature type="helix" evidence="6">
    <location>
        <begin position="606"/>
        <end position="620"/>
    </location>
</feature>
<feature type="strand" evidence="6">
    <location>
        <begin position="623"/>
        <end position="625"/>
    </location>
</feature>
<feature type="strand" evidence="6">
    <location>
        <begin position="632"/>
        <end position="636"/>
    </location>
</feature>
<name>FTTA_METTH</name>
<protein>
    <recommendedName>
        <fullName evidence="1">Transcription termination factor FttA</fullName>
        <ecNumber evidence="1">3.1.-.-</ecNumber>
    </recommendedName>
</protein>
<keyword id="KW-0002">3D-structure</keyword>
<keyword id="KW-0238">DNA-binding</keyword>
<keyword id="KW-0255">Endonuclease</keyword>
<keyword id="KW-0269">Exonuclease</keyword>
<keyword id="KW-0378">Hydrolase</keyword>
<keyword id="KW-0479">Metal-binding</keyword>
<keyword id="KW-0540">Nuclease</keyword>
<keyword id="KW-1185">Reference proteome</keyword>
<keyword id="KW-0694">RNA-binding</keyword>
<keyword id="KW-0804">Transcription</keyword>
<keyword id="KW-0805">Transcription regulation</keyword>
<keyword id="KW-0806">Transcription termination</keyword>
<keyword id="KW-0862">Zinc</keyword>